<keyword id="KW-0963">Cytoplasm</keyword>
<keyword id="KW-0460">Magnesium</keyword>
<keyword id="KW-0479">Metal-binding</keyword>
<keyword id="KW-0548">Nucleotidyltransferase</keyword>
<keyword id="KW-0694">RNA-binding</keyword>
<keyword id="KW-0808">Transferase</keyword>
<evidence type="ECO:0000255" key="1">
    <source>
        <dbReference type="HAMAP-Rule" id="MF_01595"/>
    </source>
</evidence>
<gene>
    <name evidence="1" type="primary">pnp</name>
    <name type="ordered locus">Bcep1808_2338</name>
</gene>
<sequence>MSMFNKVVKEFQWGQHKVRLETGEVARQASGAVIVDVEDTVVLATVVGAKSAKPGQDFFPLTVDYLEKTYSAGKIPGGFFRREGRPSEHETLTSRLIDRPLRPLFPEGFYNEVQVVIHVLSVNPDIPADIPALIGASAALAVSGLPFNGPVGAARVAYIDNAYVLNPTRDQIKASSLDLVVAGTERAVLMVESEADQLPEDVMLGAVVFGHEQMQIAIDAIHELVREGGKPEWDWQPAPKNEALIARVTELAHGDLLAAYQLRDKQARSTKLKEVYAATSAKLEEDALAAGTVAADKATVGNILFDIEAKIVRSQILNGEPRIDGRDTRTVRPIEIRTGVLPRTHGSALFTRGETQALVVATLGTKGDEQIIDALEGEYRERFMLHYNMPPFATGETGRVGSPKRREIGHGRLAKRALVKCLPSADEFGYSIRVVSEITESNGSSSMASVCGGCLALMDAGVPMKAHVAGIAMGLILEGNKFAVLTDILGDEDHLGDMDFKVAGTEHGVTALQMDIKIQGITKEIMQVALAQAKEGRMHILGKMTSAVSGANTQLSEFAPRMITIKINPEKIRDVIGKGGSVIRALTEETGTTIDISDDGVVTIASTSSEGMAEAKKRIENITAEIEVGQVYEGTVLKLLDFGAIVNLLPGKDGLLHISEIVNERVKDINDYLKEGQQVKVKVIQTDEKGRVRLSAKALLNEAAAASQSDTPPQQ</sequence>
<name>PNP_BURVG</name>
<protein>
    <recommendedName>
        <fullName evidence="1">Polyribonucleotide nucleotidyltransferase</fullName>
        <ecNumber evidence="1">2.7.7.8</ecNumber>
    </recommendedName>
    <alternativeName>
        <fullName evidence="1">Polynucleotide phosphorylase</fullName>
        <shortName evidence="1">PNPase</shortName>
    </alternativeName>
</protein>
<feature type="chain" id="PRO_0000329564" description="Polyribonucleotide nucleotidyltransferase">
    <location>
        <begin position="1"/>
        <end position="715"/>
    </location>
</feature>
<feature type="domain" description="KH" evidence="1">
    <location>
        <begin position="560"/>
        <end position="619"/>
    </location>
</feature>
<feature type="domain" description="S1 motif" evidence="1">
    <location>
        <begin position="629"/>
        <end position="697"/>
    </location>
</feature>
<feature type="binding site" evidence="1">
    <location>
        <position position="493"/>
    </location>
    <ligand>
        <name>Mg(2+)</name>
        <dbReference type="ChEBI" id="CHEBI:18420"/>
    </ligand>
</feature>
<feature type="binding site" evidence="1">
    <location>
        <position position="499"/>
    </location>
    <ligand>
        <name>Mg(2+)</name>
        <dbReference type="ChEBI" id="CHEBI:18420"/>
    </ligand>
</feature>
<reference key="1">
    <citation type="submission" date="2007-03" db="EMBL/GenBank/DDBJ databases">
        <title>Complete sequence of chromosome 1 of Burkholderia vietnamiensis G4.</title>
        <authorList>
            <consortium name="US DOE Joint Genome Institute"/>
            <person name="Copeland A."/>
            <person name="Lucas S."/>
            <person name="Lapidus A."/>
            <person name="Barry K."/>
            <person name="Detter J.C."/>
            <person name="Glavina del Rio T."/>
            <person name="Hammon N."/>
            <person name="Israni S."/>
            <person name="Dalin E."/>
            <person name="Tice H."/>
            <person name="Pitluck S."/>
            <person name="Chain P."/>
            <person name="Malfatti S."/>
            <person name="Shin M."/>
            <person name="Vergez L."/>
            <person name="Schmutz J."/>
            <person name="Larimer F."/>
            <person name="Land M."/>
            <person name="Hauser L."/>
            <person name="Kyrpides N."/>
            <person name="Tiedje J."/>
            <person name="Richardson P."/>
        </authorList>
    </citation>
    <scope>NUCLEOTIDE SEQUENCE [LARGE SCALE GENOMIC DNA]</scope>
    <source>
        <strain>G4 / LMG 22486</strain>
    </source>
</reference>
<organism>
    <name type="scientific">Burkholderia vietnamiensis (strain G4 / LMG 22486)</name>
    <name type="common">Burkholderia cepacia (strain R1808)</name>
    <dbReference type="NCBI Taxonomy" id="269482"/>
    <lineage>
        <taxon>Bacteria</taxon>
        <taxon>Pseudomonadati</taxon>
        <taxon>Pseudomonadota</taxon>
        <taxon>Betaproteobacteria</taxon>
        <taxon>Burkholderiales</taxon>
        <taxon>Burkholderiaceae</taxon>
        <taxon>Burkholderia</taxon>
        <taxon>Burkholderia cepacia complex</taxon>
    </lineage>
</organism>
<dbReference type="EC" id="2.7.7.8" evidence="1"/>
<dbReference type="EMBL" id="CP000614">
    <property type="protein sequence ID" value="ABO55337.1"/>
    <property type="molecule type" value="Genomic_DNA"/>
</dbReference>
<dbReference type="SMR" id="A4JGD4"/>
<dbReference type="KEGG" id="bvi:Bcep1808_2338"/>
<dbReference type="eggNOG" id="COG1185">
    <property type="taxonomic scope" value="Bacteria"/>
</dbReference>
<dbReference type="HOGENOM" id="CLU_004217_2_2_4"/>
<dbReference type="Proteomes" id="UP000002287">
    <property type="component" value="Chromosome 1"/>
</dbReference>
<dbReference type="GO" id="GO:0005829">
    <property type="term" value="C:cytosol"/>
    <property type="evidence" value="ECO:0007669"/>
    <property type="project" value="TreeGrafter"/>
</dbReference>
<dbReference type="GO" id="GO:0000175">
    <property type="term" value="F:3'-5'-RNA exonuclease activity"/>
    <property type="evidence" value="ECO:0007669"/>
    <property type="project" value="TreeGrafter"/>
</dbReference>
<dbReference type="GO" id="GO:0000287">
    <property type="term" value="F:magnesium ion binding"/>
    <property type="evidence" value="ECO:0007669"/>
    <property type="project" value="UniProtKB-UniRule"/>
</dbReference>
<dbReference type="GO" id="GO:0004654">
    <property type="term" value="F:polyribonucleotide nucleotidyltransferase activity"/>
    <property type="evidence" value="ECO:0007669"/>
    <property type="project" value="UniProtKB-UniRule"/>
</dbReference>
<dbReference type="GO" id="GO:0003723">
    <property type="term" value="F:RNA binding"/>
    <property type="evidence" value="ECO:0007669"/>
    <property type="project" value="UniProtKB-UniRule"/>
</dbReference>
<dbReference type="GO" id="GO:0006402">
    <property type="term" value="P:mRNA catabolic process"/>
    <property type="evidence" value="ECO:0007669"/>
    <property type="project" value="UniProtKB-UniRule"/>
</dbReference>
<dbReference type="GO" id="GO:0006396">
    <property type="term" value="P:RNA processing"/>
    <property type="evidence" value="ECO:0007669"/>
    <property type="project" value="InterPro"/>
</dbReference>
<dbReference type="CDD" id="cd02393">
    <property type="entry name" value="KH-I_PNPase"/>
    <property type="match status" value="1"/>
</dbReference>
<dbReference type="CDD" id="cd11363">
    <property type="entry name" value="RNase_PH_PNPase_1"/>
    <property type="match status" value="1"/>
</dbReference>
<dbReference type="CDD" id="cd11364">
    <property type="entry name" value="RNase_PH_PNPase_2"/>
    <property type="match status" value="1"/>
</dbReference>
<dbReference type="CDD" id="cd04472">
    <property type="entry name" value="S1_PNPase"/>
    <property type="match status" value="1"/>
</dbReference>
<dbReference type="FunFam" id="3.30.1370.10:FF:000001">
    <property type="entry name" value="Polyribonucleotide nucleotidyltransferase"/>
    <property type="match status" value="1"/>
</dbReference>
<dbReference type="FunFam" id="3.30.230.70:FF:000001">
    <property type="entry name" value="Polyribonucleotide nucleotidyltransferase"/>
    <property type="match status" value="1"/>
</dbReference>
<dbReference type="FunFam" id="3.30.230.70:FF:000002">
    <property type="entry name" value="Polyribonucleotide nucleotidyltransferase"/>
    <property type="match status" value="1"/>
</dbReference>
<dbReference type="FunFam" id="2.40.50.140:FF:000189">
    <property type="entry name" value="Polyribonucleotide nucleotidyltransferase, putative"/>
    <property type="match status" value="1"/>
</dbReference>
<dbReference type="Gene3D" id="3.30.230.70">
    <property type="entry name" value="GHMP Kinase, N-terminal domain"/>
    <property type="match status" value="2"/>
</dbReference>
<dbReference type="Gene3D" id="3.30.1370.10">
    <property type="entry name" value="K Homology domain, type 1"/>
    <property type="match status" value="1"/>
</dbReference>
<dbReference type="Gene3D" id="2.40.50.140">
    <property type="entry name" value="Nucleic acid-binding proteins"/>
    <property type="match status" value="1"/>
</dbReference>
<dbReference type="HAMAP" id="MF_01595">
    <property type="entry name" value="PNPase"/>
    <property type="match status" value="1"/>
</dbReference>
<dbReference type="InterPro" id="IPR001247">
    <property type="entry name" value="ExoRNase_PH_dom1"/>
</dbReference>
<dbReference type="InterPro" id="IPR015847">
    <property type="entry name" value="ExoRNase_PH_dom2"/>
</dbReference>
<dbReference type="InterPro" id="IPR036345">
    <property type="entry name" value="ExoRNase_PH_dom2_sf"/>
</dbReference>
<dbReference type="InterPro" id="IPR004087">
    <property type="entry name" value="KH_dom"/>
</dbReference>
<dbReference type="InterPro" id="IPR004088">
    <property type="entry name" value="KH_dom_type_1"/>
</dbReference>
<dbReference type="InterPro" id="IPR036612">
    <property type="entry name" value="KH_dom_type_1_sf"/>
</dbReference>
<dbReference type="InterPro" id="IPR012340">
    <property type="entry name" value="NA-bd_OB-fold"/>
</dbReference>
<dbReference type="InterPro" id="IPR012162">
    <property type="entry name" value="PNPase"/>
</dbReference>
<dbReference type="InterPro" id="IPR027408">
    <property type="entry name" value="PNPase/RNase_PH_dom_sf"/>
</dbReference>
<dbReference type="InterPro" id="IPR015848">
    <property type="entry name" value="PNPase_PH_RNA-bd_bac/org-type"/>
</dbReference>
<dbReference type="InterPro" id="IPR036456">
    <property type="entry name" value="PNPase_PH_RNA-bd_sf"/>
</dbReference>
<dbReference type="InterPro" id="IPR020568">
    <property type="entry name" value="Ribosomal_Su5_D2-typ_SF"/>
</dbReference>
<dbReference type="InterPro" id="IPR003029">
    <property type="entry name" value="S1_domain"/>
</dbReference>
<dbReference type="NCBIfam" id="TIGR03591">
    <property type="entry name" value="polynuc_phos"/>
    <property type="match status" value="1"/>
</dbReference>
<dbReference type="NCBIfam" id="NF008805">
    <property type="entry name" value="PRK11824.1"/>
    <property type="match status" value="1"/>
</dbReference>
<dbReference type="PANTHER" id="PTHR11252">
    <property type="entry name" value="POLYRIBONUCLEOTIDE NUCLEOTIDYLTRANSFERASE"/>
    <property type="match status" value="1"/>
</dbReference>
<dbReference type="PANTHER" id="PTHR11252:SF0">
    <property type="entry name" value="POLYRIBONUCLEOTIDE NUCLEOTIDYLTRANSFERASE 1, MITOCHONDRIAL"/>
    <property type="match status" value="1"/>
</dbReference>
<dbReference type="Pfam" id="PF00013">
    <property type="entry name" value="KH_1"/>
    <property type="match status" value="1"/>
</dbReference>
<dbReference type="Pfam" id="PF03726">
    <property type="entry name" value="PNPase"/>
    <property type="match status" value="1"/>
</dbReference>
<dbReference type="Pfam" id="PF01138">
    <property type="entry name" value="RNase_PH"/>
    <property type="match status" value="2"/>
</dbReference>
<dbReference type="Pfam" id="PF03725">
    <property type="entry name" value="RNase_PH_C"/>
    <property type="match status" value="2"/>
</dbReference>
<dbReference type="Pfam" id="PF00575">
    <property type="entry name" value="S1"/>
    <property type="match status" value="1"/>
</dbReference>
<dbReference type="PIRSF" id="PIRSF005499">
    <property type="entry name" value="PNPase"/>
    <property type="match status" value="1"/>
</dbReference>
<dbReference type="SMART" id="SM00322">
    <property type="entry name" value="KH"/>
    <property type="match status" value="1"/>
</dbReference>
<dbReference type="SMART" id="SM00316">
    <property type="entry name" value="S1"/>
    <property type="match status" value="1"/>
</dbReference>
<dbReference type="SUPFAM" id="SSF54791">
    <property type="entry name" value="Eukaryotic type KH-domain (KH-domain type I)"/>
    <property type="match status" value="1"/>
</dbReference>
<dbReference type="SUPFAM" id="SSF50249">
    <property type="entry name" value="Nucleic acid-binding proteins"/>
    <property type="match status" value="1"/>
</dbReference>
<dbReference type="SUPFAM" id="SSF46915">
    <property type="entry name" value="Polynucleotide phosphorylase/guanosine pentaphosphate synthase (PNPase/GPSI), domain 3"/>
    <property type="match status" value="1"/>
</dbReference>
<dbReference type="SUPFAM" id="SSF55666">
    <property type="entry name" value="Ribonuclease PH domain 2-like"/>
    <property type="match status" value="2"/>
</dbReference>
<dbReference type="SUPFAM" id="SSF54211">
    <property type="entry name" value="Ribosomal protein S5 domain 2-like"/>
    <property type="match status" value="2"/>
</dbReference>
<dbReference type="PROSITE" id="PS50084">
    <property type="entry name" value="KH_TYPE_1"/>
    <property type="match status" value="1"/>
</dbReference>
<dbReference type="PROSITE" id="PS50126">
    <property type="entry name" value="S1"/>
    <property type="match status" value="1"/>
</dbReference>
<accession>A4JGD4</accession>
<proteinExistence type="inferred from homology"/>
<comment type="function">
    <text evidence="1">Involved in mRNA degradation. Catalyzes the phosphorolysis of single-stranded polyribonucleotides processively in the 3'- to 5'-direction.</text>
</comment>
<comment type="catalytic activity">
    <reaction evidence="1">
        <text>RNA(n+1) + phosphate = RNA(n) + a ribonucleoside 5'-diphosphate</text>
        <dbReference type="Rhea" id="RHEA:22096"/>
        <dbReference type="Rhea" id="RHEA-COMP:14527"/>
        <dbReference type="Rhea" id="RHEA-COMP:17342"/>
        <dbReference type="ChEBI" id="CHEBI:43474"/>
        <dbReference type="ChEBI" id="CHEBI:57930"/>
        <dbReference type="ChEBI" id="CHEBI:140395"/>
        <dbReference type="EC" id="2.7.7.8"/>
    </reaction>
</comment>
<comment type="cofactor">
    <cofactor evidence="1">
        <name>Mg(2+)</name>
        <dbReference type="ChEBI" id="CHEBI:18420"/>
    </cofactor>
</comment>
<comment type="subcellular location">
    <subcellularLocation>
        <location evidence="1">Cytoplasm</location>
    </subcellularLocation>
</comment>
<comment type="similarity">
    <text evidence="1">Belongs to the polyribonucleotide nucleotidyltransferase family.</text>
</comment>